<feature type="chain" id="PRO_0000075383" description="A-kinase anchor protein 8">
    <location>
        <begin position="1"/>
        <end position="687"/>
    </location>
</feature>
<feature type="zinc finger region" description="C2H2 AKAP95-type 1" evidence="4">
    <location>
        <begin position="390"/>
        <end position="412"/>
    </location>
</feature>
<feature type="zinc finger region" description="C2H2 AKAP95-type 2" evidence="4">
    <location>
        <begin position="479"/>
        <end position="502"/>
    </location>
</feature>
<feature type="region of interest" description="Interaction with DPY30" evidence="1">
    <location>
        <begin position="1"/>
        <end position="210"/>
    </location>
</feature>
<feature type="region of interest" description="Interaction with MCM2" evidence="1">
    <location>
        <begin position="1"/>
        <end position="195"/>
    </location>
</feature>
<feature type="region of interest" description="Disordered" evidence="5">
    <location>
        <begin position="104"/>
        <end position="124"/>
    </location>
</feature>
<feature type="region of interest" description="Interaction with DDX5" evidence="6">
    <location>
        <begin position="109"/>
        <end position="201"/>
    </location>
</feature>
<feature type="region of interest" description="Nuclear matrix targeting site" evidence="9">
    <location>
        <begin position="127"/>
        <end position="152"/>
    </location>
</feature>
<feature type="region of interest" description="Disordered" evidence="5">
    <location>
        <begin position="189"/>
        <end position="221"/>
    </location>
</feature>
<feature type="region of interest" description="Disordered" evidence="5">
    <location>
        <begin position="278"/>
        <end position="380"/>
    </location>
</feature>
<feature type="region of interest" description="Involved in chromatin-binding" evidence="1">
    <location>
        <begin position="385"/>
        <end position="448"/>
    </location>
</feature>
<feature type="region of interest" description="Involved in condensin complex recruitment" evidence="1">
    <location>
        <begin position="523"/>
        <end position="565"/>
    </location>
</feature>
<feature type="region of interest" description="RII-binding" evidence="10">
    <location>
        <begin position="568"/>
        <end position="585"/>
    </location>
</feature>
<feature type="region of interest" description="Required for interaction with MYCBP" evidence="3">
    <location>
        <begin position="572"/>
        <end position="589"/>
    </location>
</feature>
<feature type="region of interest" description="Disordered" evidence="5">
    <location>
        <begin position="606"/>
        <end position="687"/>
    </location>
</feature>
<feature type="short sequence motif" description="Bipartite nuclear localization signal" evidence="1 6">
    <location>
        <begin position="287"/>
        <end position="304"/>
    </location>
</feature>
<feature type="compositionally biased region" description="Gly residues" evidence="5">
    <location>
        <begin position="109"/>
        <end position="118"/>
    </location>
</feature>
<feature type="compositionally biased region" description="Basic and acidic residues" evidence="5">
    <location>
        <begin position="281"/>
        <end position="295"/>
    </location>
</feature>
<feature type="compositionally biased region" description="Basic and acidic residues" evidence="5">
    <location>
        <begin position="312"/>
        <end position="321"/>
    </location>
</feature>
<feature type="compositionally biased region" description="Acidic residues" evidence="5">
    <location>
        <begin position="322"/>
        <end position="332"/>
    </location>
</feature>
<feature type="compositionally biased region" description="Basic and acidic residues" evidence="5">
    <location>
        <begin position="336"/>
        <end position="358"/>
    </location>
</feature>
<feature type="compositionally biased region" description="Basic and acidic residues" evidence="5">
    <location>
        <begin position="633"/>
        <end position="648"/>
    </location>
</feature>
<feature type="compositionally biased region" description="Low complexity" evidence="5">
    <location>
        <begin position="649"/>
        <end position="666"/>
    </location>
</feature>
<feature type="modified residue" description="Phosphoserine" evidence="3">
    <location>
        <position position="72"/>
    </location>
</feature>
<feature type="modified residue" description="Asymmetric dimethylarginine; alternate" evidence="3">
    <location>
        <position position="109"/>
    </location>
</feature>
<feature type="modified residue" description="Omega-N-methylarginine; alternate" evidence="3">
    <location>
        <position position="109"/>
    </location>
</feature>
<feature type="modified residue" description="Phosphoserine" evidence="1">
    <location>
        <position position="199"/>
    </location>
</feature>
<feature type="modified residue" description="Omega-N-methylarginine" evidence="3">
    <location>
        <position position="233"/>
    </location>
</feature>
<feature type="modified residue" description="Omega-N-methylarginine" evidence="1">
    <location>
        <position position="277"/>
    </location>
</feature>
<feature type="modified residue" description="Phosphoserine" evidence="11">
    <location>
        <position position="321"/>
    </location>
</feature>
<feature type="modified residue" description="Phosphoserine" evidence="11">
    <location>
        <position position="326"/>
    </location>
</feature>
<feature type="modified residue" description="Phosphoserine" evidence="11">
    <location>
        <position position="337"/>
    </location>
</feature>
<feature type="modified residue" description="Phosphothreonine" evidence="11">
    <location>
        <position position="553"/>
    </location>
</feature>
<feature type="modified residue" description="Phosphoserine" evidence="11">
    <location>
        <position position="659"/>
    </location>
</feature>
<feature type="cross-link" description="Glycyl lysine isopeptide (Lys-Gly) (interchain with G-Cter in SUMO2)" evidence="1">
    <location>
        <position position="315"/>
    </location>
</feature>
<feature type="cross-link" description="Glycyl lysine isopeptide (Lys-Gly) (interchain with G-Cter in SUMO2)" evidence="1">
    <location>
        <position position="563"/>
    </location>
</feature>
<feature type="mutagenesis site" description="Impairs nuclear localization." evidence="6">
    <original>KR</original>
    <variation>EQ</variation>
    <location>
        <begin position="302"/>
        <end position="303"/>
    </location>
</feature>
<protein>
    <recommendedName>
        <fullName>A-kinase anchor protein 8</fullName>
        <shortName>AKAP-8</shortName>
    </recommendedName>
    <alternativeName>
        <fullName>A-kinase anchor protein 95 kDa</fullName>
        <shortName>AKAP 95</shortName>
    </alternativeName>
</protein>
<keyword id="KW-0963">Cytoplasm</keyword>
<keyword id="KW-0238">DNA-binding</keyword>
<keyword id="KW-0391">Immunity</keyword>
<keyword id="KW-0399">Innate immunity</keyword>
<keyword id="KW-1017">Isopeptide bond</keyword>
<keyword id="KW-0479">Metal-binding</keyword>
<keyword id="KW-0488">Methylation</keyword>
<keyword id="KW-0539">Nucleus</keyword>
<keyword id="KW-0597">Phosphoprotein</keyword>
<keyword id="KW-0653">Protein transport</keyword>
<keyword id="KW-1185">Reference proteome</keyword>
<keyword id="KW-0677">Repeat</keyword>
<keyword id="KW-0804">Transcription</keyword>
<keyword id="KW-0805">Transcription regulation</keyword>
<keyword id="KW-0813">Transport</keyword>
<keyword id="KW-0832">Ubl conjugation</keyword>
<keyword id="KW-0862">Zinc</keyword>
<keyword id="KW-0863">Zinc-finger</keyword>
<reference key="1">
    <citation type="journal article" date="1994" name="J. Biol. Chem.">
        <title>Cloning and characterization of AKAP 95, a nuclear protein that associates with the regulatory subunit of type II cAMP-dependent protein kinase.</title>
        <authorList>
            <person name="Coghlan V.M."/>
            <person name="Langeberg L.K."/>
            <person name="Fernandez A."/>
            <person name="Lamb N.J."/>
            <person name="Scott J.D."/>
        </authorList>
    </citation>
    <scope>NUCLEOTIDE SEQUENCE [MRNA]</scope>
    <scope>FUNCTION</scope>
    <scope>SUBCELLULAR LOCATION</scope>
    <scope>TISSUE SPECIFICITY</scope>
    <scope>INTERACTION WITH PRKAR2A</scope>
    <scope>RII-BINDING SITE</scope>
    <source>
        <tissue>Pituitary</tissue>
    </source>
</reference>
<reference key="2">
    <citation type="journal article" date="2001" name="J. Biol. Chem.">
        <title>A-kinase-anchoring protein AKAP95 is targeted to the nuclear matrix and associates with p68 RNA helicase.</title>
        <authorList>
            <person name="Akileswaran L."/>
            <person name="Taraska J.W."/>
            <person name="Sayer J.A."/>
            <person name="Gettemy J.M."/>
            <person name="Coghlan V.M."/>
        </authorList>
    </citation>
    <scope>SUBCELLULAR LOCATION</scope>
    <scope>INTERACTION WITH DDX5</scope>
    <scope>NUCLEAR LOCALIZATION SIGNAL</scope>
    <scope>MUTAGENESIS OF 302-LYS-ARG-303</scope>
</reference>
<reference key="3">
    <citation type="journal article" date="2006" name="Cell Cycle">
        <title>G1/S Cyclins interact with regulatory subunit of PKA via A-kinase anchoring protein, AKAP95.</title>
        <authorList>
            <person name="Arsenijevic T."/>
            <person name="Degraef C."/>
            <person name="Dumont J.E."/>
            <person name="Roger P.P."/>
            <person name="Pirson I."/>
        </authorList>
    </citation>
    <scope>INTERACTION WITH CCNE1</scope>
</reference>
<reference key="4">
    <citation type="journal article" date="2012" name="Nat. Commun.">
        <title>Quantitative maps of protein phosphorylation sites across 14 different rat organs and tissues.</title>
        <authorList>
            <person name="Lundby A."/>
            <person name="Secher A."/>
            <person name="Lage K."/>
            <person name="Nordsborg N.B."/>
            <person name="Dmytriyev A."/>
            <person name="Lundby C."/>
            <person name="Olsen J.V."/>
        </authorList>
    </citation>
    <scope>PHOSPHORYLATION [LARGE SCALE ANALYSIS] AT SER-321; SER-326; SER-337; THR-553 AND SER-659</scope>
    <scope>IDENTIFICATION BY MASS SPECTROMETRY [LARGE SCALE ANALYSIS]</scope>
</reference>
<gene>
    <name type="primary">Akap8</name>
    <name type="synonym">Akap95</name>
</gene>
<dbReference type="EMBL" id="U01914">
    <property type="protein sequence ID" value="AAA95941.1"/>
    <property type="molecule type" value="mRNA"/>
</dbReference>
<dbReference type="RefSeq" id="NP_446307.1">
    <property type="nucleotide sequence ID" value="NM_053855.1"/>
</dbReference>
<dbReference type="FunCoup" id="Q63014">
    <property type="interactions" value="2406"/>
</dbReference>
<dbReference type="IntAct" id="Q63014">
    <property type="interactions" value="1"/>
</dbReference>
<dbReference type="STRING" id="10116.ENSRNOP00000008827"/>
<dbReference type="iPTMnet" id="Q63014"/>
<dbReference type="PhosphoSitePlus" id="Q63014"/>
<dbReference type="jPOST" id="Q63014"/>
<dbReference type="PaxDb" id="10116-ENSRNOP00000008827"/>
<dbReference type="Ensembl" id="ENSRNOT00000008827.7">
    <property type="protein sequence ID" value="ENSRNOP00000008827.4"/>
    <property type="gene ID" value="ENSRNOG00000006559.7"/>
</dbReference>
<dbReference type="GeneID" id="116633"/>
<dbReference type="KEGG" id="rno:116633"/>
<dbReference type="UCSC" id="RGD:620832">
    <property type="organism name" value="rat"/>
</dbReference>
<dbReference type="AGR" id="RGD:620832"/>
<dbReference type="CTD" id="10270"/>
<dbReference type="RGD" id="620832">
    <property type="gene designation" value="Akap8"/>
</dbReference>
<dbReference type="eggNOG" id="ENOG502QZY2">
    <property type="taxonomic scope" value="Eukaryota"/>
</dbReference>
<dbReference type="GeneTree" id="ENSGT00530000063777"/>
<dbReference type="HOGENOM" id="CLU_024193_1_0_1"/>
<dbReference type="InParanoid" id="Q63014"/>
<dbReference type="OMA" id="WTELNYV"/>
<dbReference type="OrthoDB" id="8923935at2759"/>
<dbReference type="PhylomeDB" id="Q63014"/>
<dbReference type="TreeFam" id="TF105407"/>
<dbReference type="PRO" id="PR:Q63014"/>
<dbReference type="Proteomes" id="UP000002494">
    <property type="component" value="Chromosome 7"/>
</dbReference>
<dbReference type="Bgee" id="ENSRNOG00000006559">
    <property type="expression patterns" value="Expressed in spleen and 20 other cell types or tissues"/>
</dbReference>
<dbReference type="ExpressionAtlas" id="Q63014">
    <property type="expression patterns" value="baseline and differential"/>
</dbReference>
<dbReference type="GO" id="GO:0000793">
    <property type="term" value="C:condensed chromosome"/>
    <property type="evidence" value="ECO:0000266"/>
    <property type="project" value="RGD"/>
</dbReference>
<dbReference type="GO" id="GO:0005737">
    <property type="term" value="C:cytoplasm"/>
    <property type="evidence" value="ECO:0007669"/>
    <property type="project" value="UniProtKB-SubCell"/>
</dbReference>
<dbReference type="GO" id="GO:0001939">
    <property type="term" value="C:female pronucleus"/>
    <property type="evidence" value="ECO:0000266"/>
    <property type="project" value="RGD"/>
</dbReference>
<dbReference type="GO" id="GO:0016363">
    <property type="term" value="C:nuclear matrix"/>
    <property type="evidence" value="ECO:0000314"/>
    <property type="project" value="RGD"/>
</dbReference>
<dbReference type="GO" id="GO:0005730">
    <property type="term" value="C:nucleolus"/>
    <property type="evidence" value="ECO:0000266"/>
    <property type="project" value="RGD"/>
</dbReference>
<dbReference type="GO" id="GO:0005654">
    <property type="term" value="C:nucleoplasm"/>
    <property type="evidence" value="ECO:0007669"/>
    <property type="project" value="Ensembl"/>
</dbReference>
<dbReference type="GO" id="GO:0005634">
    <property type="term" value="C:nucleus"/>
    <property type="evidence" value="ECO:0000266"/>
    <property type="project" value="RGD"/>
</dbReference>
<dbReference type="GO" id="GO:0003677">
    <property type="term" value="F:DNA binding"/>
    <property type="evidence" value="ECO:0000314"/>
    <property type="project" value="RGD"/>
</dbReference>
<dbReference type="GO" id="GO:0003690">
    <property type="term" value="F:double-stranded DNA binding"/>
    <property type="evidence" value="ECO:0000314"/>
    <property type="project" value="RGD"/>
</dbReference>
<dbReference type="GO" id="GO:0042826">
    <property type="term" value="F:histone deacetylase binding"/>
    <property type="evidence" value="ECO:0000266"/>
    <property type="project" value="RGD"/>
</dbReference>
<dbReference type="GO" id="GO:0051059">
    <property type="term" value="F:NF-kappaB binding"/>
    <property type="evidence" value="ECO:0000266"/>
    <property type="project" value="RGD"/>
</dbReference>
<dbReference type="GO" id="GO:0034237">
    <property type="term" value="F:protein kinase A regulatory subunit binding"/>
    <property type="evidence" value="ECO:0000314"/>
    <property type="project" value="RGD"/>
</dbReference>
<dbReference type="GO" id="GO:0008270">
    <property type="term" value="F:zinc ion binding"/>
    <property type="evidence" value="ECO:0000314"/>
    <property type="project" value="RGD"/>
</dbReference>
<dbReference type="GO" id="GO:0044839">
    <property type="term" value="P:cell cycle G2/M phase transition"/>
    <property type="evidence" value="ECO:0000266"/>
    <property type="project" value="RGD"/>
</dbReference>
<dbReference type="GO" id="GO:0071222">
    <property type="term" value="P:cellular response to lipopolysaccharide"/>
    <property type="evidence" value="ECO:0000266"/>
    <property type="project" value="RGD"/>
</dbReference>
<dbReference type="GO" id="GO:0071380">
    <property type="term" value="P:cellular response to prostaglandin E stimulus"/>
    <property type="evidence" value="ECO:0000266"/>
    <property type="project" value="RGD"/>
</dbReference>
<dbReference type="GO" id="GO:0045087">
    <property type="term" value="P:innate immune response"/>
    <property type="evidence" value="ECO:0007669"/>
    <property type="project" value="UniProtKB-KW"/>
</dbReference>
<dbReference type="GO" id="GO:0007076">
    <property type="term" value="P:mitotic chromosome condensation"/>
    <property type="evidence" value="ECO:0000266"/>
    <property type="project" value="RGD"/>
</dbReference>
<dbReference type="GO" id="GO:0032720">
    <property type="term" value="P:negative regulation of tumor necrosis factor production"/>
    <property type="evidence" value="ECO:0000266"/>
    <property type="project" value="RGD"/>
</dbReference>
<dbReference type="GO" id="GO:0015031">
    <property type="term" value="P:protein transport"/>
    <property type="evidence" value="ECO:0007669"/>
    <property type="project" value="UniProtKB-KW"/>
</dbReference>
<dbReference type="InterPro" id="IPR007071">
    <property type="entry name" value="AKAP95"/>
</dbReference>
<dbReference type="InterPro" id="IPR034736">
    <property type="entry name" value="ZF_C2H2_AKAP95"/>
</dbReference>
<dbReference type="PANTHER" id="PTHR12190:SF6">
    <property type="entry name" value="A-KINASE ANCHOR PROTEIN 8"/>
    <property type="match status" value="1"/>
</dbReference>
<dbReference type="PANTHER" id="PTHR12190">
    <property type="entry name" value="A-KINASE ANCHOR PROTEIN AKAP 8"/>
    <property type="match status" value="1"/>
</dbReference>
<dbReference type="Pfam" id="PF04988">
    <property type="entry name" value="AKAP95"/>
    <property type="match status" value="1"/>
</dbReference>
<dbReference type="SUPFAM" id="SSF56935">
    <property type="entry name" value="Porins"/>
    <property type="match status" value="1"/>
</dbReference>
<dbReference type="PROSITE" id="PS51799">
    <property type="entry name" value="ZF_C2H2_AKAP95"/>
    <property type="match status" value="2"/>
</dbReference>
<sequence length="687" mass="76162">MEQSYGGYGAWSAGPANTQGTYGSGVASWQGYENYSYYNAQNTSVPTGTPYSYGPASWEATKASDGGLAAGSSAMHVASFAPEPCTDNSDSLIAKINQRLDMLSKEGGRGGISSGGEGMQDRDSSFRFQPYESYDSRPCMPEHTPYRPSYSYDYDFDLGTDRNGSFGGTFNDCRDPTPERGALDGFLRGRGQGRFQDRSNSSTFIRSDPFMPPSASSEPLSTTWSELNYMGGRGLGGPSTNRPPPSLFSQSMAPDYSMMGMQGVGGFGGTMPYGCGRSQTRIRDWPRRRGFERFGPDNMGRKRKPFPLYEEPDAKLARADSEGDLSENDDGAGDLRSGDEEFRGEDDLCDSRKQRGEKEDEDEDVKKRREKQRRRDRMRDRAADRIQFACSVCKFRSFEDEEIQKHLQSKFHKETLRFISTKLPDKTVEFLQEYIINRNKKIEKRRQELLEKESPKPKPDPFKGIGQEHFFKRIEAAHCLACDMLIPAQHQLLQRHLHSVDHNHNRRLAAEQFKKTSLHVAKSVLNNKHIVKMLEKYLKGEDPFVNETADLETEGDENLGEEKETPEEVAAEVLAEVITAAVKAVEGDGEPAAEHSDVLAEVEGPVDTAEAGSDSHTGKLLEEQTCETASETRNMEDMARGEAAEARNEAAVPAAAAGSPVPVIAIPGILEDELEQTDAEAKDTPTE</sequence>
<comment type="function">
    <text evidence="1 3 8">Anchoring protein that mediates the subcellular compartmentation of cAMP-dependent protein kinase (PKA type II) (PubMed:8125992). Acts as an anchor for a PKA-signaling complex onto mitotic chromosomes, which is required for maintenance of chromosomes in a condensed form throughout mitosis. Recruits condensin complex subunit NCAPD2 to chromosomes required for chromatin condensation; the function appears to be independent from PKA-anchoring. May help to deliver cyclin D/E to CDK4 to facilitate cell cycle progression. Required for cell cycle G2/M transition and histone deacetylation during mitosis. In mitotic cells recruits HDAC3 to the vicinity of chromatin leading to deacetylation and subsequent phosphorylation at 'Ser-10' of histone H3; in this function may act redundantly with AKAP8L. Involved in nuclear retention of RPS6KA1 upon ERK activation thus inducing cell proliferation. May be involved in regulation of DNA replication by acting as scaffold for MCM2. Enhances HMT activity of the KMT2 family MLL4/WBP7 complex and is involved in transcriptional regulation. In a teratocarcinoma cell line is involved in retinoic acid-mediated induction of developmental genes implicating H3 'Lys-4' methylation. May be involved in recruitment of active CASP3 to the nucleus in apoptotic cells. May act as a carrier protein of GJA1 for its transport to the nucleus. May play a repressive role in the regulation of rDNA transcription. Preferentially binds GC-rich DNA in vitro. In cells, associates with ribosomal RNA (rRNA) chromatin, preferentially with rRNA promoter and transcribed regions. Involved in modulation of Toll-like receptor signaling. Required for the cAMP-dependent suppression of TNF-alpha in early stages of LPS-induced macrophage activation; the function probably implicates targeting of PKA to NFKB1 (By similarity).</text>
</comment>
<comment type="subunit">
    <text evidence="1 2 3 6 7 10">Binds to dimeric RII-alpha regulatory subunit of PKA during mitosis (PubMed:8125992). Interacts (via C-terminus) with FIGN (By similarity). Interacts with NCAPD2, CCND1, CCND3, MCM2, RPS6KA1, PDE4A, CASP3 (By similarity). Interacts with DDX5, CCNE1 (PubMed:11279182, PubMed:16721056). Interacts with NFKB1; detetcted in the cytoplasm. Interacts with MYCBP; MYCBP is translocated to the nucleus and the interaction prevents the association of the PKA catalytic subunit leading to suppression of PKA activity. Interacts with DPY30; mediating AKAP8 association with at least the MLL4/WBP7 HMT complex. Interacts with HDAC3; increased during mitosis. Interacts with GJA1; in the nucleus and in the nuclear membrane; the nuclear association increases with progress of cell cycle G1, S and G2 phase and decreases in M phase (By similarity).</text>
</comment>
<comment type="interaction">
    <interactant intactId="EBI-11617845">
        <id>Q63014</id>
    </interactant>
    <interactant intactId="EBI-643076">
        <id>Q61656</id>
        <label>Ddx5</label>
    </interactant>
    <organismsDiffer>true</organismsDiffer>
    <experiments>4</experiments>
</comment>
<comment type="subcellular location">
    <subcellularLocation>
        <location evidence="6 8">Nucleus matrix</location>
    </subcellularLocation>
    <subcellularLocation>
        <location evidence="1">Nucleus</location>
        <location evidence="1">Nucleolus</location>
    </subcellularLocation>
    <subcellularLocation>
        <location evidence="3">Cytoplasm</location>
    </subcellularLocation>
    <text evidence="1">Associated with the nuclear matrix. Redistributed and detached from condensed chromatin during mitosis. Exhibits partial localization to the nucleolus in interphase, possibly to the fibrillary center and/or to the dense fibrillary component (By similarity).</text>
</comment>
<comment type="tissue specificity">
    <text evidence="8">Widely expressed. The protein has been detected in liver, fibroblasts, granulosa, myoblast, lymphoma and Sertoli cells.</text>
</comment>
<comment type="PTM">
    <text evidence="1">Phosphorylated on tyrosine residues probably by SRC subfamily protein kinases; multiple phosphorylation is leading to dissociation from nuclear structures implicated in chromatin structural changes.</text>
</comment>
<comment type="similarity">
    <text evidence="4">Belongs to the AKAP95 family.</text>
</comment>
<proteinExistence type="evidence at protein level"/>
<name>AKAP8_RAT</name>
<evidence type="ECO:0000250" key="1">
    <source>
        <dbReference type="UniProtKB" id="O43823"/>
    </source>
</evidence>
<evidence type="ECO:0000250" key="2">
    <source>
        <dbReference type="UniProtKB" id="Q5VK71"/>
    </source>
</evidence>
<evidence type="ECO:0000250" key="3">
    <source>
        <dbReference type="UniProtKB" id="Q9DBR0"/>
    </source>
</evidence>
<evidence type="ECO:0000255" key="4">
    <source>
        <dbReference type="PROSITE-ProRule" id="PRU01140"/>
    </source>
</evidence>
<evidence type="ECO:0000256" key="5">
    <source>
        <dbReference type="SAM" id="MobiDB-lite"/>
    </source>
</evidence>
<evidence type="ECO:0000269" key="6">
    <source>
    </source>
</evidence>
<evidence type="ECO:0000269" key="7">
    <source>
    </source>
</evidence>
<evidence type="ECO:0000269" key="8">
    <source>
    </source>
</evidence>
<evidence type="ECO:0000305" key="9">
    <source>
    </source>
</evidence>
<evidence type="ECO:0000305" key="10">
    <source>
    </source>
</evidence>
<evidence type="ECO:0007744" key="11">
    <source>
    </source>
</evidence>
<accession>Q63014</accession>
<organism>
    <name type="scientific">Rattus norvegicus</name>
    <name type="common">Rat</name>
    <dbReference type="NCBI Taxonomy" id="10116"/>
    <lineage>
        <taxon>Eukaryota</taxon>
        <taxon>Metazoa</taxon>
        <taxon>Chordata</taxon>
        <taxon>Craniata</taxon>
        <taxon>Vertebrata</taxon>
        <taxon>Euteleostomi</taxon>
        <taxon>Mammalia</taxon>
        <taxon>Eutheria</taxon>
        <taxon>Euarchontoglires</taxon>
        <taxon>Glires</taxon>
        <taxon>Rodentia</taxon>
        <taxon>Myomorpha</taxon>
        <taxon>Muroidea</taxon>
        <taxon>Muridae</taxon>
        <taxon>Murinae</taxon>
        <taxon>Rattus</taxon>
    </lineage>
</organism>